<keyword id="KW-0032">Aminotransferase</keyword>
<keyword id="KW-0472">Membrane</keyword>
<keyword id="KW-0663">Pyridoxal phosphate</keyword>
<keyword id="KW-1185">Reference proteome</keyword>
<keyword id="KW-0808">Transferase</keyword>
<keyword id="KW-0812">Transmembrane</keyword>
<keyword id="KW-1133">Transmembrane helix</keyword>
<accession>Q9FE98</accession>
<evidence type="ECO:0000250" key="1">
    <source>
        <dbReference type="UniProtKB" id="Q9S7N2"/>
    </source>
</evidence>
<evidence type="ECO:0000255" key="2"/>
<evidence type="ECO:0000305" key="3"/>
<feature type="chain" id="PRO_0000411676" description="Tryptophan aminotransferase-related protein 3">
    <location>
        <begin position="1"/>
        <end position="457"/>
    </location>
</feature>
<feature type="transmembrane region" description="Helical" evidence="2">
    <location>
        <begin position="6"/>
        <end position="26"/>
    </location>
</feature>
<feature type="binding site" evidence="1">
    <location>
        <position position="123"/>
    </location>
    <ligand>
        <name>pyridoxal 5'-phosphate</name>
        <dbReference type="ChEBI" id="CHEBI:597326"/>
    </ligand>
</feature>
<feature type="binding site" evidence="1">
    <location>
        <begin position="163"/>
        <end position="164"/>
    </location>
    <ligand>
        <name>pyridoxal 5'-phosphate</name>
        <dbReference type="ChEBI" id="CHEBI:597326"/>
    </ligand>
</feature>
<feature type="binding site" evidence="1">
    <location>
        <position position="237"/>
    </location>
    <ligand>
        <name>pyridoxal 5'-phosphate</name>
        <dbReference type="ChEBI" id="CHEBI:597326"/>
    </ligand>
</feature>
<feature type="binding site" evidence="1">
    <location>
        <begin position="257"/>
        <end position="260"/>
    </location>
    <ligand>
        <name>pyridoxal 5'-phosphate</name>
        <dbReference type="ChEBI" id="CHEBI:597326"/>
    </ligand>
</feature>
<feature type="binding site" evidence="1">
    <location>
        <begin position="280"/>
        <end position="283"/>
    </location>
    <ligand>
        <name>pyridoxal 5'-phosphate</name>
        <dbReference type="ChEBI" id="CHEBI:597326"/>
    </ligand>
</feature>
<feature type="binding site" evidence="1">
    <location>
        <position position="291"/>
    </location>
    <ligand>
        <name>pyridoxal 5'-phosphate</name>
        <dbReference type="ChEBI" id="CHEBI:597326"/>
    </ligand>
</feature>
<feature type="modified residue" description="N6-(pyridoxal phosphate)lysine" evidence="2">
    <location>
        <position position="283"/>
    </location>
</feature>
<name>TAR3_ARATH</name>
<protein>
    <recommendedName>
        <fullName>Tryptophan aminotransferase-related protein 3</fullName>
        <ecNumber>2.6.1.-</ecNumber>
    </recommendedName>
</protein>
<comment type="function">
    <text evidence="1">Probable aminotransferase.</text>
</comment>
<comment type="cofactor">
    <cofactor evidence="1">
        <name>pyridoxal 5'-phosphate</name>
        <dbReference type="ChEBI" id="CHEBI:597326"/>
    </cofactor>
</comment>
<comment type="subcellular location">
    <subcellularLocation>
        <location evidence="3">Membrane</location>
        <topology evidence="3">Single-pass membrane protein</topology>
    </subcellularLocation>
</comment>
<comment type="similarity">
    <text evidence="3">Belongs to the alliinase family.</text>
</comment>
<dbReference type="EC" id="2.6.1.-"/>
<dbReference type="EMBL" id="AC015446">
    <property type="protein sequence ID" value="AAG12533.1"/>
    <property type="molecule type" value="Genomic_DNA"/>
</dbReference>
<dbReference type="EMBL" id="AC079286">
    <property type="protein sequence ID" value="AAG12844.1"/>
    <property type="molecule type" value="Genomic_DNA"/>
</dbReference>
<dbReference type="EMBL" id="CP002684">
    <property type="protein sequence ID" value="AEE31660.1"/>
    <property type="molecule type" value="Genomic_DNA"/>
</dbReference>
<dbReference type="PIR" id="C86464">
    <property type="entry name" value="C86464"/>
</dbReference>
<dbReference type="RefSeq" id="NP_174666.1">
    <property type="nucleotide sequence ID" value="NM_103126.2"/>
</dbReference>
<dbReference type="SMR" id="Q9FE98"/>
<dbReference type="FunCoup" id="Q9FE98">
    <property type="interactions" value="184"/>
</dbReference>
<dbReference type="STRING" id="3702.Q9FE98"/>
<dbReference type="iPTMnet" id="Q9FE98"/>
<dbReference type="PaxDb" id="3702-AT1G34040.1"/>
<dbReference type="ProteomicsDB" id="234153"/>
<dbReference type="EnsemblPlants" id="AT1G34040.1">
    <property type="protein sequence ID" value="AT1G34040.1"/>
    <property type="gene ID" value="AT1G34040"/>
</dbReference>
<dbReference type="GeneID" id="840301"/>
<dbReference type="Gramene" id="AT1G34040.1">
    <property type="protein sequence ID" value="AT1G34040.1"/>
    <property type="gene ID" value="AT1G34040"/>
</dbReference>
<dbReference type="KEGG" id="ath:AT1G34040"/>
<dbReference type="Araport" id="AT1G34040"/>
<dbReference type="TAIR" id="AT1G34040">
    <property type="gene designation" value="TAR3"/>
</dbReference>
<dbReference type="eggNOG" id="ENOG502QQJV">
    <property type="taxonomic scope" value="Eukaryota"/>
</dbReference>
<dbReference type="HOGENOM" id="CLU_036760_2_0_1"/>
<dbReference type="InParanoid" id="Q9FE98"/>
<dbReference type="OMA" id="DVMRAKW"/>
<dbReference type="PhylomeDB" id="Q9FE98"/>
<dbReference type="BioCyc" id="ARA:AT1G34040-MONOMER"/>
<dbReference type="PRO" id="PR:Q9FE98"/>
<dbReference type="Proteomes" id="UP000006548">
    <property type="component" value="Chromosome 1"/>
</dbReference>
<dbReference type="ExpressionAtlas" id="Q9FE98">
    <property type="expression patterns" value="baseline and differential"/>
</dbReference>
<dbReference type="GO" id="GO:0016020">
    <property type="term" value="C:membrane"/>
    <property type="evidence" value="ECO:0007669"/>
    <property type="project" value="UniProtKB-SubCell"/>
</dbReference>
<dbReference type="GO" id="GO:0016846">
    <property type="term" value="F:carbon-sulfur lyase activity"/>
    <property type="evidence" value="ECO:0007669"/>
    <property type="project" value="InterPro"/>
</dbReference>
<dbReference type="GO" id="GO:0008483">
    <property type="term" value="F:transaminase activity"/>
    <property type="evidence" value="ECO:0007669"/>
    <property type="project" value="UniProtKB-KW"/>
</dbReference>
<dbReference type="CDD" id="cd00609">
    <property type="entry name" value="AAT_like"/>
    <property type="match status" value="1"/>
</dbReference>
<dbReference type="Gene3D" id="3.90.1150.10">
    <property type="entry name" value="Aspartate Aminotransferase, domain 1"/>
    <property type="match status" value="1"/>
</dbReference>
<dbReference type="Gene3D" id="2.10.25.30">
    <property type="entry name" value="EGF-like, alliinase"/>
    <property type="match status" value="1"/>
</dbReference>
<dbReference type="Gene3D" id="3.40.640.10">
    <property type="entry name" value="Type I PLP-dependent aspartate aminotransferase-like (Major domain)"/>
    <property type="match status" value="1"/>
</dbReference>
<dbReference type="InterPro" id="IPR006948">
    <property type="entry name" value="Alliinase_C"/>
</dbReference>
<dbReference type="InterPro" id="IPR037029">
    <property type="entry name" value="Alliinase_N_sf"/>
</dbReference>
<dbReference type="InterPro" id="IPR006947">
    <property type="entry name" value="EGF_alliinase"/>
</dbReference>
<dbReference type="InterPro" id="IPR050478">
    <property type="entry name" value="Ethylene_sulfur-biosynth"/>
</dbReference>
<dbReference type="InterPro" id="IPR015424">
    <property type="entry name" value="PyrdxlP-dep_Trfase"/>
</dbReference>
<dbReference type="InterPro" id="IPR015421">
    <property type="entry name" value="PyrdxlP-dep_Trfase_major"/>
</dbReference>
<dbReference type="InterPro" id="IPR015422">
    <property type="entry name" value="PyrdxlP-dep_Trfase_small"/>
</dbReference>
<dbReference type="PANTHER" id="PTHR43795">
    <property type="entry name" value="BIFUNCTIONAL ASPARTATE AMINOTRANSFERASE AND GLUTAMATE/ASPARTATE-PREPHENATE AMINOTRANSFERASE-RELATED"/>
    <property type="match status" value="1"/>
</dbReference>
<dbReference type="PANTHER" id="PTHR43795:SF20">
    <property type="entry name" value="TRYPTOPHAN AMINOTRANSFERASE-RELATED PROTEIN 3"/>
    <property type="match status" value="1"/>
</dbReference>
<dbReference type="Pfam" id="PF04864">
    <property type="entry name" value="Alliinase_C"/>
    <property type="match status" value="1"/>
</dbReference>
<dbReference type="Pfam" id="PF04863">
    <property type="entry name" value="EGF_alliinase"/>
    <property type="match status" value="1"/>
</dbReference>
<dbReference type="SUPFAM" id="SSF53383">
    <property type="entry name" value="PLP-dependent transferases"/>
    <property type="match status" value="1"/>
</dbReference>
<organism>
    <name type="scientific">Arabidopsis thaliana</name>
    <name type="common">Mouse-ear cress</name>
    <dbReference type="NCBI Taxonomy" id="3702"/>
    <lineage>
        <taxon>Eukaryota</taxon>
        <taxon>Viridiplantae</taxon>
        <taxon>Streptophyta</taxon>
        <taxon>Embryophyta</taxon>
        <taxon>Tracheophyta</taxon>
        <taxon>Spermatophyta</taxon>
        <taxon>Magnoliopsida</taxon>
        <taxon>eudicotyledons</taxon>
        <taxon>Gunneridae</taxon>
        <taxon>Pentapetalae</taxon>
        <taxon>rosids</taxon>
        <taxon>malvids</taxon>
        <taxon>Brassicales</taxon>
        <taxon>Brassicaceae</taxon>
        <taxon>Camelineae</taxon>
        <taxon>Arabidopsis</taxon>
    </lineage>
</organism>
<proteinExistence type="inferred from homology"/>
<sequence>MIHNKLLIAGSIILNLVFTIHILYNNTSTWSPTWTNRAALEAEAAASVSCSGHGRSYVDGLGVLDGHKPCECHDCYTGKDCSVLLKDCPVDANSGDPLFLEPFWIRKAEESAVVESGWHRMSYTFNGYGLFMSAELEKIIRKLHNVVGNAVTDNRFIIFGAGATQLLAASVHALSQTNSLSPSRLVTSVPYYNLYKQQADFFNSTNLKFEGDASAWKRSERNDDIKQVIEIVTSPNNPDGKLKRAVLDGPNVKYIHDYAYYWPYFSPITRQADEDLSLFSLSKTTGHAGSRFGWALVKEKTVYEKMKIYISLSSMGVSRDTQLRALQLLKVVIGDGGNEIFRFGYGTLKKRWEILNKIFSMSTRFSLETIKPEYCNYFKKVREFTPSYAWVKCERPEDTDCYEIFKAAKITGRNGEMFGSDERFVRLSLIRSQDDFDQLIAMLKKFVSKEAVVVDSI</sequence>
<gene>
    <name type="primary">TAR3</name>
    <name type="ordered locus">At1g34040</name>
    <name type="ORF">F12G12.14</name>
    <name type="ORF">T15K4.10</name>
</gene>
<reference key="1">
    <citation type="journal article" date="2000" name="Nature">
        <title>Sequence and analysis of chromosome 1 of the plant Arabidopsis thaliana.</title>
        <authorList>
            <person name="Theologis A."/>
            <person name="Ecker J.R."/>
            <person name="Palm C.J."/>
            <person name="Federspiel N.A."/>
            <person name="Kaul S."/>
            <person name="White O."/>
            <person name="Alonso J."/>
            <person name="Altafi H."/>
            <person name="Araujo R."/>
            <person name="Bowman C.L."/>
            <person name="Brooks S.Y."/>
            <person name="Buehler E."/>
            <person name="Chan A."/>
            <person name="Chao Q."/>
            <person name="Chen H."/>
            <person name="Cheuk R.F."/>
            <person name="Chin C.W."/>
            <person name="Chung M.K."/>
            <person name="Conn L."/>
            <person name="Conway A.B."/>
            <person name="Conway A.R."/>
            <person name="Creasy T.H."/>
            <person name="Dewar K."/>
            <person name="Dunn P."/>
            <person name="Etgu P."/>
            <person name="Feldblyum T.V."/>
            <person name="Feng J.-D."/>
            <person name="Fong B."/>
            <person name="Fujii C.Y."/>
            <person name="Gill J.E."/>
            <person name="Goldsmith A.D."/>
            <person name="Haas B."/>
            <person name="Hansen N.F."/>
            <person name="Hughes B."/>
            <person name="Huizar L."/>
            <person name="Hunter J.L."/>
            <person name="Jenkins J."/>
            <person name="Johnson-Hopson C."/>
            <person name="Khan S."/>
            <person name="Khaykin E."/>
            <person name="Kim C.J."/>
            <person name="Koo H.L."/>
            <person name="Kremenetskaia I."/>
            <person name="Kurtz D.B."/>
            <person name="Kwan A."/>
            <person name="Lam B."/>
            <person name="Langin-Hooper S."/>
            <person name="Lee A."/>
            <person name="Lee J.M."/>
            <person name="Lenz C.A."/>
            <person name="Li J.H."/>
            <person name="Li Y.-P."/>
            <person name="Lin X."/>
            <person name="Liu S.X."/>
            <person name="Liu Z.A."/>
            <person name="Luros J.S."/>
            <person name="Maiti R."/>
            <person name="Marziali A."/>
            <person name="Militscher J."/>
            <person name="Miranda M."/>
            <person name="Nguyen M."/>
            <person name="Nierman W.C."/>
            <person name="Osborne B.I."/>
            <person name="Pai G."/>
            <person name="Peterson J."/>
            <person name="Pham P.K."/>
            <person name="Rizzo M."/>
            <person name="Rooney T."/>
            <person name="Rowley D."/>
            <person name="Sakano H."/>
            <person name="Salzberg S.L."/>
            <person name="Schwartz J.R."/>
            <person name="Shinn P."/>
            <person name="Southwick A.M."/>
            <person name="Sun H."/>
            <person name="Tallon L.J."/>
            <person name="Tambunga G."/>
            <person name="Toriumi M.J."/>
            <person name="Town C.D."/>
            <person name="Utterback T."/>
            <person name="Van Aken S."/>
            <person name="Vaysberg M."/>
            <person name="Vysotskaia V.S."/>
            <person name="Walker M."/>
            <person name="Wu D."/>
            <person name="Yu G."/>
            <person name="Fraser C.M."/>
            <person name="Venter J.C."/>
            <person name="Davis R.W."/>
        </authorList>
    </citation>
    <scope>NUCLEOTIDE SEQUENCE [LARGE SCALE GENOMIC DNA]</scope>
    <source>
        <strain>cv. Columbia</strain>
    </source>
</reference>
<reference key="2">
    <citation type="journal article" date="2017" name="Plant J.">
        <title>Araport11: a complete reannotation of the Arabidopsis thaliana reference genome.</title>
        <authorList>
            <person name="Cheng C.Y."/>
            <person name="Krishnakumar V."/>
            <person name="Chan A.P."/>
            <person name="Thibaud-Nissen F."/>
            <person name="Schobel S."/>
            <person name="Town C.D."/>
        </authorList>
    </citation>
    <scope>GENOME REANNOTATION</scope>
    <source>
        <strain>cv. Columbia</strain>
    </source>
</reference>
<reference key="3">
    <citation type="journal article" date="2008" name="Cell">
        <title>TAA1-mediated auxin biosynthesis is essential for hormone crosstalk and plant development.</title>
        <authorList>
            <person name="Stepanova A.N."/>
            <person name="Robertson-Hoyt J."/>
            <person name="Yun J."/>
            <person name="Benavente L.M."/>
            <person name="Xie D.Y."/>
            <person name="Dolezal K."/>
            <person name="Schlereth A."/>
            <person name="Juergens G."/>
            <person name="Alonso J.M."/>
        </authorList>
    </citation>
    <scope>GENE FAMILY</scope>
    <scope>NOMENCLATURE</scope>
</reference>
<reference key="4">
    <citation type="journal article" date="2008" name="Cell">
        <title>Rapid synthesis of auxin via a new tryptophan-dependent pathway is required for shade avoidance in plants.</title>
        <authorList>
            <person name="Tao Y."/>
            <person name="Ferrer J.L."/>
            <person name="Ljung K."/>
            <person name="Pojer F."/>
            <person name="Hong F."/>
            <person name="Long J.A."/>
            <person name="Li L."/>
            <person name="Moreno J.E."/>
            <person name="Bowman M.E."/>
            <person name="Ivans L.J."/>
            <person name="Cheng Y."/>
            <person name="Lim J."/>
            <person name="Zhao Y."/>
            <person name="Ballare C.L."/>
            <person name="Sandberg G."/>
            <person name="Noel J.P."/>
            <person name="Chory J."/>
        </authorList>
    </citation>
    <scope>GENE FAMILY</scope>
    <scope>NOMENCLATURE</scope>
</reference>